<name>PG204_VACCW</name>
<accession>P25213</accession>
<accession>Q76ZK5</accession>
<reference key="1">
    <citation type="journal article" date="1991" name="J. Gen. Virol.">
        <title>Nucleotide sequence of 42 kbp of vaccinia virus strain WR from near the right inverted terminal repeat.</title>
        <authorList>
            <person name="Smith G.L."/>
            <person name="Chan Y.S."/>
            <person name="Howard S.T."/>
        </authorList>
    </citation>
    <scope>NUCLEOTIDE SEQUENCE [GENOMIC DNA]</scope>
</reference>
<reference key="2">
    <citation type="journal article" date="1991" name="J. Gen. Virol.">
        <title>Two vaccinia virus proteins structurally related to the interleukin-1 receptor and the immunoglobulin superfamily.</title>
        <authorList>
            <person name="Smith G.L."/>
            <person name="Chan Y.S."/>
        </authorList>
    </citation>
    <scope>NUCLEOTIDE SEQUENCE [GENOMIC DNA]</scope>
</reference>
<reference key="3">
    <citation type="submission" date="2003-02" db="EMBL/GenBank/DDBJ databases">
        <title>Sequencing of the coding region of Vaccinia-WR to an average 9-fold redundancy and an error rate of 0.16/10kb.</title>
        <authorList>
            <person name="Esposito J.J."/>
            <person name="Frace A.M."/>
            <person name="Sammons S.A."/>
            <person name="Olsen-Rasmussen M."/>
            <person name="Osborne J."/>
            <person name="Wohlhueter R."/>
        </authorList>
    </citation>
    <scope>NUCLEOTIDE SEQUENCE [LARGE SCALE GENOMIC DNA]</scope>
</reference>
<reference key="4">
    <citation type="journal article" date="1995" name="Cell">
        <title>Vaccinia virus encodes a soluble type I interferon receptor of novel structure and broad species specificity.</title>
        <authorList>
            <person name="Symons J.A."/>
            <person name="Alcami A."/>
            <person name="Smith G.L."/>
        </authorList>
    </citation>
    <scope>INTERACTION WITH HOST IFNA1</scope>
</reference>
<reference key="5">
    <citation type="journal article" date="2000" name="J. Virol.">
        <title>The vaccinia virus soluble alpha/beta interferon (IFN) receptor binds to the cell surface and protects cells from the antiviral effects of IFN.</title>
        <authorList>
            <person name="Alcami A."/>
            <person name="Symons J.A."/>
            <person name="Smith G.L."/>
        </authorList>
    </citation>
    <scope>SUBCELLULAR LOCATION</scope>
</reference>
<reference key="6">
    <citation type="journal article" date="2009" name="J. Virol.">
        <title>Vaccinia virus-mediated inhibition of type I interferon responses is a multifactorial process involving the soluble type I interferon receptor B18 and intracellular components.</title>
        <authorList>
            <person name="Waibler Z."/>
            <person name="Anzaghe M."/>
            <person name="Frenz T."/>
            <person name="Schwantes A."/>
            <person name="Pohlmann C."/>
            <person name="Ludwig H."/>
            <person name="Palomo-Otero M."/>
            <person name="Alcami A."/>
            <person name="Sutter G."/>
            <person name="Kalinke U."/>
        </authorList>
    </citation>
    <scope>FUNCTION</scope>
</reference>
<reference key="7">
    <citation type="journal article" date="2017" name="Hum. Gene Ther.">
        <title>Improvement of In Vivo Expression of Genes Delivered by Self-Amplifying RNA Using Vaccinia Virus Immune Evasion Proteins.</title>
        <authorList>
            <person name="Beissert T."/>
            <person name="Koste L."/>
            <person name="Perkovic M."/>
            <person name="Walzer K.C."/>
            <person name="Erbar S."/>
            <person name="Selmi A."/>
            <person name="Diken M."/>
            <person name="Kreiter S."/>
            <person name="Tuereci O."/>
            <person name="Sahin U."/>
        </authorList>
    </citation>
    <scope>FUNCTION</scope>
</reference>
<comment type="function">
    <text evidence="4 5">Counteracts the antiviral effects of host IFN-alpha/beta and key IFN-inducible proteins involved in viral RNA degradation suxh as host OAS1 (PubMed:28877647). Acts as a soluble IFN-alpha receptor and thus inhibits the interaction between host IFN-alpha and its receptor.</text>
</comment>
<comment type="subunit">
    <text evidence="6">Interacts with host IFNA1.</text>
</comment>
<comment type="subcellular location">
    <subcellularLocation>
        <location evidence="3">Secreted</location>
    </subcellularLocation>
    <text>Found associated with both uninfected and infected host cell membranes after secretion.</text>
</comment>
<comment type="induction">
    <text>Expressed in the early phase of the viral replicative cycle.</text>
</comment>
<comment type="similarity">
    <text evidence="7">Belongs to the interleukin-1 receptor family.</text>
</comment>
<proteinExistence type="evidence at protein level"/>
<keyword id="KW-1015">Disulfide bond</keyword>
<keyword id="KW-0244">Early protein</keyword>
<keyword id="KW-0325">Glycoprotein</keyword>
<keyword id="KW-0945">Host-virus interaction</keyword>
<keyword id="KW-0393">Immunoglobulin domain</keyword>
<keyword id="KW-1090">Inhibition of host innate immune response by virus</keyword>
<keyword id="KW-1114">Inhibition of host interferon signaling pathway by virus</keyword>
<keyword id="KW-0922">Interferon antiviral system evasion</keyword>
<keyword id="KW-1185">Reference proteome</keyword>
<keyword id="KW-0677">Repeat</keyword>
<keyword id="KW-0964">Secreted</keyword>
<keyword id="KW-0732">Signal</keyword>
<keyword id="KW-0899">Viral immunoevasion</keyword>
<sequence>MTMKMMVHIYFVSLLLLLFHSYAIDIENEITEFFNKMRDTLPAKDSKWLNPACMFGGTMNDIAALGEPFSAKCPPIEDSLLSHRYKDYVVKWERLEKNRRRQVSNKRVKHGDLWIANYTSKFSNRRYLCTVTTKNGDCVQGIVRSHIRKPPSCIPKTYELGTHDKYGIDLYCGILYAKHYNNITWYKDNKEINIDDIKYSQTGKELIIHNPELEDSGRYDCYVHYDDVRIKNDIVVSRCKILTVIPSQDHRFKLILDPKINVTIGEPANITCTAVSTSLLIDDVLIEWENPSGWLIGFDFDVYSVLTSRGGITEATLYFENVTEEYIGNTYKCRGHNYYFEKTLTTTVVLE</sequence>
<gene>
    <name type="primary">OPG204</name>
    <name type="ordered locus">VACWR200</name>
    <name type="ORF">B18R</name>
</gene>
<dbReference type="EMBL" id="D11079">
    <property type="protein sequence ID" value="BAA01848.1"/>
    <property type="molecule type" value="Genomic_DNA"/>
</dbReference>
<dbReference type="EMBL" id="D01019">
    <property type="protein sequence ID" value="BAA00826.1"/>
    <property type="molecule type" value="Genomic_DNA"/>
</dbReference>
<dbReference type="EMBL" id="AY243312">
    <property type="protein sequence ID" value="AAO89479.1"/>
    <property type="molecule type" value="Genomic_DNA"/>
</dbReference>
<dbReference type="PIR" id="B38472">
    <property type="entry name" value="SAVZWR"/>
</dbReference>
<dbReference type="SMR" id="P25213"/>
<dbReference type="DNASU" id="3707577"/>
<dbReference type="KEGG" id="vg:3707577"/>
<dbReference type="Proteomes" id="UP000000344">
    <property type="component" value="Genome"/>
</dbReference>
<dbReference type="GO" id="GO:0005615">
    <property type="term" value="C:extracellular space"/>
    <property type="evidence" value="ECO:0000314"/>
    <property type="project" value="UniProt"/>
</dbReference>
<dbReference type="GO" id="GO:0140319">
    <property type="term" value="F:receptor decoy activity"/>
    <property type="evidence" value="ECO:0000314"/>
    <property type="project" value="UniProt"/>
</dbReference>
<dbReference type="GO" id="GO:0052170">
    <property type="term" value="P:symbiont-mediated suppression of host innate immune response"/>
    <property type="evidence" value="ECO:0007669"/>
    <property type="project" value="UniProtKB-KW"/>
</dbReference>
<dbReference type="GO" id="GO:0039502">
    <property type="term" value="P:symbiont-mediated suppression of host type I interferon-mediated signaling pathway"/>
    <property type="evidence" value="ECO:0000314"/>
    <property type="project" value="UniProt"/>
</dbReference>
<dbReference type="CDD" id="cd00096">
    <property type="entry name" value="Ig"/>
    <property type="match status" value="1"/>
</dbReference>
<dbReference type="Gene3D" id="2.60.40.10">
    <property type="entry name" value="Immunoglobulins"/>
    <property type="match status" value="3"/>
</dbReference>
<dbReference type="InterPro" id="IPR007110">
    <property type="entry name" value="Ig-like_dom"/>
</dbReference>
<dbReference type="InterPro" id="IPR036179">
    <property type="entry name" value="Ig-like_dom_sf"/>
</dbReference>
<dbReference type="InterPro" id="IPR013783">
    <property type="entry name" value="Ig-like_fold"/>
</dbReference>
<dbReference type="InterPro" id="IPR003599">
    <property type="entry name" value="Ig_sub"/>
</dbReference>
<dbReference type="InterPro" id="IPR015621">
    <property type="entry name" value="IL-1_rcpt_fam"/>
</dbReference>
<dbReference type="InterPro" id="IPR013151">
    <property type="entry name" value="Immunoglobulin_dom"/>
</dbReference>
<dbReference type="PANTHER" id="PTHR11890">
    <property type="entry name" value="INTERLEUKIN-1 RECEPTOR FAMILY MEMBER"/>
    <property type="match status" value="1"/>
</dbReference>
<dbReference type="PANTHER" id="PTHR11890:SF44">
    <property type="entry name" value="X-LINKED INTERLEUKIN-1 RECEPTOR ACCESSORY PROTEIN-LIKE 2"/>
    <property type="match status" value="1"/>
</dbReference>
<dbReference type="Pfam" id="PF00047">
    <property type="entry name" value="ig"/>
    <property type="match status" value="1"/>
</dbReference>
<dbReference type="Pfam" id="PF13895">
    <property type="entry name" value="Ig_2"/>
    <property type="match status" value="1"/>
</dbReference>
<dbReference type="SMART" id="SM00409">
    <property type="entry name" value="IG"/>
    <property type="match status" value="2"/>
</dbReference>
<dbReference type="SUPFAM" id="SSF48726">
    <property type="entry name" value="Immunoglobulin"/>
    <property type="match status" value="2"/>
</dbReference>
<dbReference type="PROSITE" id="PS50835">
    <property type="entry name" value="IG_LIKE"/>
    <property type="match status" value="2"/>
</dbReference>
<protein>
    <recommendedName>
        <fullName>Soluble interferon alpha/beta receptor OPG204</fullName>
        <shortName>B18</shortName>
    </recommendedName>
</protein>
<evidence type="ECO:0000255" key="1"/>
<evidence type="ECO:0000255" key="2">
    <source>
        <dbReference type="PROSITE-ProRule" id="PRU00114"/>
    </source>
</evidence>
<evidence type="ECO:0000269" key="3">
    <source>
    </source>
</evidence>
<evidence type="ECO:0000269" key="4">
    <source>
    </source>
</evidence>
<evidence type="ECO:0000269" key="5">
    <source>
    </source>
</evidence>
<evidence type="ECO:0000269" key="6">
    <source>
    </source>
</evidence>
<evidence type="ECO:0000305" key="7"/>
<organism>
    <name type="scientific">Vaccinia virus (strain Western Reserve)</name>
    <name type="common">VACV</name>
    <name type="synonym">Vaccinia virus (strain WR)</name>
    <dbReference type="NCBI Taxonomy" id="10254"/>
    <lineage>
        <taxon>Viruses</taxon>
        <taxon>Varidnaviria</taxon>
        <taxon>Bamfordvirae</taxon>
        <taxon>Nucleocytoviricota</taxon>
        <taxon>Pokkesviricetes</taxon>
        <taxon>Chitovirales</taxon>
        <taxon>Poxviridae</taxon>
        <taxon>Chordopoxvirinae</taxon>
        <taxon>Orthopoxvirus</taxon>
        <taxon>Vaccinia virus</taxon>
    </lineage>
</organism>
<feature type="signal peptide" evidence="1">
    <location>
        <begin position="1"/>
        <end position="19"/>
    </location>
</feature>
<feature type="chain" id="PRO_0000015467" description="Soluble interferon alpha/beta receptor OPG204">
    <location>
        <begin position="20"/>
        <end position="351"/>
    </location>
</feature>
<feature type="domain" description="Ig-like C2-type 1">
    <location>
        <begin position="65"/>
        <end position="147"/>
    </location>
</feature>
<feature type="domain" description="Ig-like C2-type 2">
    <location>
        <begin position="155"/>
        <end position="237"/>
    </location>
</feature>
<feature type="domain" description="Ig-like V-type">
    <location>
        <begin position="246"/>
        <end position="345"/>
    </location>
</feature>
<feature type="glycosylation site" description="N-linked (GlcNAc...) asparagine; by host" evidence="1">
    <location>
        <position position="117"/>
    </location>
</feature>
<feature type="glycosylation site" description="N-linked (GlcNAc...) asparagine; by host" evidence="1">
    <location>
        <position position="182"/>
    </location>
</feature>
<feature type="glycosylation site" description="N-linked (GlcNAc...) asparagine; by host" evidence="1">
    <location>
        <position position="261"/>
    </location>
</feature>
<feature type="glycosylation site" description="N-linked (GlcNAc...) asparagine; by host" evidence="1">
    <location>
        <position position="269"/>
    </location>
</feature>
<feature type="glycosylation site" description="N-linked (GlcNAc...) asparagine; by host" evidence="1">
    <location>
        <position position="321"/>
    </location>
</feature>
<feature type="disulfide bond" evidence="2">
    <location>
        <begin position="73"/>
        <end position="129"/>
    </location>
</feature>
<feature type="disulfide bond" evidence="2">
    <location>
        <begin position="172"/>
        <end position="221"/>
    </location>
</feature>
<feature type="disulfide bond" evidence="2">
    <location>
        <begin position="272"/>
        <end position="333"/>
    </location>
</feature>
<organismHost>
    <name type="scientific">Bos taurus</name>
    <name type="common">Bovine</name>
    <dbReference type="NCBI Taxonomy" id="9913"/>
</organismHost>